<organism>
    <name type="scientific">Methanosarcina acetivorans (strain ATCC 35395 / DSM 2834 / JCM 12185 / C2A)</name>
    <dbReference type="NCBI Taxonomy" id="188937"/>
    <lineage>
        <taxon>Archaea</taxon>
        <taxon>Methanobacteriati</taxon>
        <taxon>Methanobacteriota</taxon>
        <taxon>Stenosarchaea group</taxon>
        <taxon>Methanomicrobia</taxon>
        <taxon>Methanosarcinales</taxon>
        <taxon>Methanosarcinaceae</taxon>
        <taxon>Methanosarcina</taxon>
    </lineage>
</organism>
<name>CHEB1_METAC</name>
<keyword id="KW-0145">Chemotaxis</keyword>
<keyword id="KW-0963">Cytoplasm</keyword>
<keyword id="KW-0378">Hydrolase</keyword>
<keyword id="KW-0597">Phosphoprotein</keyword>
<keyword id="KW-1185">Reference proteome</keyword>
<dbReference type="EC" id="3.1.1.61" evidence="1"/>
<dbReference type="EC" id="3.5.1.44" evidence="1"/>
<dbReference type="EMBL" id="AE010299">
    <property type="protein sequence ID" value="AAM06440.1"/>
    <property type="molecule type" value="Genomic_DNA"/>
</dbReference>
<dbReference type="SMR" id="Q8TLG9"/>
<dbReference type="STRING" id="188937.MA_3067"/>
<dbReference type="EnsemblBacteria" id="AAM06440">
    <property type="protein sequence ID" value="AAM06440"/>
    <property type="gene ID" value="MA_3067"/>
</dbReference>
<dbReference type="KEGG" id="mac:MA_3067"/>
<dbReference type="HOGENOM" id="CLU_000445_51_0_2"/>
<dbReference type="InParanoid" id="Q8TLG9"/>
<dbReference type="PhylomeDB" id="Q8TLG9"/>
<dbReference type="Proteomes" id="UP000002487">
    <property type="component" value="Chromosome"/>
</dbReference>
<dbReference type="GO" id="GO:0005737">
    <property type="term" value="C:cytoplasm"/>
    <property type="evidence" value="ECO:0007669"/>
    <property type="project" value="UniProtKB-SubCell"/>
</dbReference>
<dbReference type="GO" id="GO:0000156">
    <property type="term" value="F:phosphorelay response regulator activity"/>
    <property type="evidence" value="ECO:0007669"/>
    <property type="project" value="InterPro"/>
</dbReference>
<dbReference type="GO" id="GO:0008984">
    <property type="term" value="F:protein-glutamate methylesterase activity"/>
    <property type="evidence" value="ECO:0007669"/>
    <property type="project" value="UniProtKB-UniRule"/>
</dbReference>
<dbReference type="GO" id="GO:0050568">
    <property type="term" value="F:protein-glutamine glutaminase activity"/>
    <property type="evidence" value="ECO:0007669"/>
    <property type="project" value="UniProtKB-UniRule"/>
</dbReference>
<dbReference type="GO" id="GO:0006935">
    <property type="term" value="P:chemotaxis"/>
    <property type="evidence" value="ECO:0007669"/>
    <property type="project" value="UniProtKB-UniRule"/>
</dbReference>
<dbReference type="CDD" id="cd16432">
    <property type="entry name" value="CheB_Rec"/>
    <property type="match status" value="1"/>
</dbReference>
<dbReference type="CDD" id="cd17541">
    <property type="entry name" value="REC_CheB-like"/>
    <property type="match status" value="1"/>
</dbReference>
<dbReference type="Gene3D" id="3.40.50.2300">
    <property type="match status" value="1"/>
</dbReference>
<dbReference type="Gene3D" id="3.40.50.180">
    <property type="entry name" value="Methylesterase CheB, C-terminal domain"/>
    <property type="match status" value="1"/>
</dbReference>
<dbReference type="HAMAP" id="MF_00099">
    <property type="entry name" value="CheB_chemtxs"/>
    <property type="match status" value="1"/>
</dbReference>
<dbReference type="InterPro" id="IPR008248">
    <property type="entry name" value="CheB-like"/>
</dbReference>
<dbReference type="InterPro" id="IPR035909">
    <property type="entry name" value="CheB_C"/>
</dbReference>
<dbReference type="InterPro" id="IPR011006">
    <property type="entry name" value="CheY-like_superfamily"/>
</dbReference>
<dbReference type="InterPro" id="IPR000673">
    <property type="entry name" value="Sig_transdc_resp-reg_Me-estase"/>
</dbReference>
<dbReference type="InterPro" id="IPR001789">
    <property type="entry name" value="Sig_transdc_resp-reg_receiver"/>
</dbReference>
<dbReference type="NCBIfam" id="NF001965">
    <property type="entry name" value="PRK00742.1"/>
    <property type="match status" value="1"/>
</dbReference>
<dbReference type="PANTHER" id="PTHR42872">
    <property type="entry name" value="PROTEIN-GLUTAMATE METHYLESTERASE/PROTEIN-GLUTAMINE GLUTAMINASE"/>
    <property type="match status" value="1"/>
</dbReference>
<dbReference type="PANTHER" id="PTHR42872:SF6">
    <property type="entry name" value="PROTEIN-GLUTAMATE METHYLESTERASE_PROTEIN-GLUTAMINE GLUTAMINASE"/>
    <property type="match status" value="1"/>
</dbReference>
<dbReference type="Pfam" id="PF01339">
    <property type="entry name" value="CheB_methylest"/>
    <property type="match status" value="1"/>
</dbReference>
<dbReference type="Pfam" id="PF00072">
    <property type="entry name" value="Response_reg"/>
    <property type="match status" value="1"/>
</dbReference>
<dbReference type="PIRSF" id="PIRSF000876">
    <property type="entry name" value="RR_chemtxs_CheB"/>
    <property type="match status" value="1"/>
</dbReference>
<dbReference type="SMART" id="SM00448">
    <property type="entry name" value="REC"/>
    <property type="match status" value="1"/>
</dbReference>
<dbReference type="SUPFAM" id="SSF52172">
    <property type="entry name" value="CheY-like"/>
    <property type="match status" value="1"/>
</dbReference>
<dbReference type="SUPFAM" id="SSF52738">
    <property type="entry name" value="Methylesterase CheB, C-terminal domain"/>
    <property type="match status" value="1"/>
</dbReference>
<dbReference type="PROSITE" id="PS50122">
    <property type="entry name" value="CHEB"/>
    <property type="match status" value="1"/>
</dbReference>
<dbReference type="PROSITE" id="PS50110">
    <property type="entry name" value="RESPONSE_REGULATORY"/>
    <property type="match status" value="1"/>
</dbReference>
<evidence type="ECO:0000255" key="1">
    <source>
        <dbReference type="HAMAP-Rule" id="MF_00099"/>
    </source>
</evidence>
<comment type="function">
    <text evidence="1">Involved in chemotaxis. Part of a chemotaxis signal transduction system that modulates chemotaxis in response to various stimuli. Catalyzes the demethylation of specific methylglutamate residues introduced into the chemoreceptors (methyl-accepting chemotaxis proteins or MCP) by CheR. Also mediates the irreversible deamidation of specific glutamine residues to glutamic acid.</text>
</comment>
<comment type="catalytic activity">
    <reaction evidence="1">
        <text>[protein]-L-glutamate 5-O-methyl ester + H2O = L-glutamyl-[protein] + methanol + H(+)</text>
        <dbReference type="Rhea" id="RHEA:23236"/>
        <dbReference type="Rhea" id="RHEA-COMP:10208"/>
        <dbReference type="Rhea" id="RHEA-COMP:10311"/>
        <dbReference type="ChEBI" id="CHEBI:15377"/>
        <dbReference type="ChEBI" id="CHEBI:15378"/>
        <dbReference type="ChEBI" id="CHEBI:17790"/>
        <dbReference type="ChEBI" id="CHEBI:29973"/>
        <dbReference type="ChEBI" id="CHEBI:82795"/>
        <dbReference type="EC" id="3.1.1.61"/>
    </reaction>
</comment>
<comment type="catalytic activity">
    <reaction evidence="1">
        <text>L-glutaminyl-[protein] + H2O = L-glutamyl-[protein] + NH4(+)</text>
        <dbReference type="Rhea" id="RHEA:16441"/>
        <dbReference type="Rhea" id="RHEA-COMP:10207"/>
        <dbReference type="Rhea" id="RHEA-COMP:10208"/>
        <dbReference type="ChEBI" id="CHEBI:15377"/>
        <dbReference type="ChEBI" id="CHEBI:28938"/>
        <dbReference type="ChEBI" id="CHEBI:29973"/>
        <dbReference type="ChEBI" id="CHEBI:30011"/>
        <dbReference type="EC" id="3.5.1.44"/>
    </reaction>
</comment>
<comment type="subcellular location">
    <subcellularLocation>
        <location evidence="1">Cytoplasm</location>
    </subcellularLocation>
</comment>
<comment type="domain">
    <text evidence="1">Contains a C-terminal catalytic domain, and an N-terminal region which modulates catalytic activity.</text>
</comment>
<comment type="PTM">
    <text evidence="1">Phosphorylated by CheA. Phosphorylation of the N-terminal regulatory domain activates the methylesterase activity.</text>
</comment>
<comment type="similarity">
    <text evidence="1">Belongs to the CheB family.</text>
</comment>
<sequence>MRTLIVDDSAFMRMAIRSMLASSPDIKIVGDACNGKEAVEKAKSLHPDVVIMDVNMPVMDGLTAVKTIMNTSPVPIIMFSTLTTEGSKEALEALHLGAIDFTAKSESHHDVNKAEKELVDKIRNIHSSNPNLLRLINMRKFKGEVVRGKWRCAGDFGILIGSSTGGPSSLEQVIPRLPGDLPAPVFVVQHMPEGGFCRQMAERLNFLSELEVKEARNNEKVTAGIVYVAPGGYHMTVRKALDVTRIKLIKSQPVHAVMPAVDVTAESMLAVYGKNIVASILTGMGFDGASGFKTIRDAGGSTIACSEDTCVIFGMPKAAIEAGAIDVVKPIFEIPEEIVKRLEAKCNGK</sequence>
<feature type="chain" id="PRO_0000158051" description="Protein-glutamate methylesterase/protein-glutamine glutaminase 1">
    <location>
        <begin position="1"/>
        <end position="349"/>
    </location>
</feature>
<feature type="domain" description="Response regulatory" evidence="1">
    <location>
        <begin position="2"/>
        <end position="119"/>
    </location>
</feature>
<feature type="domain" description="CheB-type methylesterase" evidence="1">
    <location>
        <begin position="158"/>
        <end position="345"/>
    </location>
</feature>
<feature type="active site" evidence="1">
    <location>
        <position position="163"/>
    </location>
</feature>
<feature type="active site" evidence="1">
    <location>
        <position position="190"/>
    </location>
</feature>
<feature type="active site" evidence="1">
    <location>
        <position position="287"/>
    </location>
</feature>
<feature type="modified residue" description="4-aspartylphosphate" evidence="1">
    <location>
        <position position="53"/>
    </location>
</feature>
<reference key="1">
    <citation type="journal article" date="2002" name="Genome Res.">
        <title>The genome of Methanosarcina acetivorans reveals extensive metabolic and physiological diversity.</title>
        <authorList>
            <person name="Galagan J.E."/>
            <person name="Nusbaum C."/>
            <person name="Roy A."/>
            <person name="Endrizzi M.G."/>
            <person name="Macdonald P."/>
            <person name="FitzHugh W."/>
            <person name="Calvo S."/>
            <person name="Engels R."/>
            <person name="Smirnov S."/>
            <person name="Atnoor D."/>
            <person name="Brown A."/>
            <person name="Allen N."/>
            <person name="Naylor J."/>
            <person name="Stange-Thomann N."/>
            <person name="DeArellano K."/>
            <person name="Johnson R."/>
            <person name="Linton L."/>
            <person name="McEwan P."/>
            <person name="McKernan K."/>
            <person name="Talamas J."/>
            <person name="Tirrell A."/>
            <person name="Ye W."/>
            <person name="Zimmer A."/>
            <person name="Barber R.D."/>
            <person name="Cann I."/>
            <person name="Graham D.E."/>
            <person name="Grahame D.A."/>
            <person name="Guss A.M."/>
            <person name="Hedderich R."/>
            <person name="Ingram-Smith C."/>
            <person name="Kuettner H.C."/>
            <person name="Krzycki J.A."/>
            <person name="Leigh J.A."/>
            <person name="Li W."/>
            <person name="Liu J."/>
            <person name="Mukhopadhyay B."/>
            <person name="Reeve J.N."/>
            <person name="Smith K."/>
            <person name="Springer T.A."/>
            <person name="Umayam L.A."/>
            <person name="White O."/>
            <person name="White R.H."/>
            <person name="de Macario E.C."/>
            <person name="Ferry J.G."/>
            <person name="Jarrell K.F."/>
            <person name="Jing H."/>
            <person name="Macario A.J.L."/>
            <person name="Paulsen I.T."/>
            <person name="Pritchett M."/>
            <person name="Sowers K.R."/>
            <person name="Swanson R.V."/>
            <person name="Zinder S.H."/>
            <person name="Lander E."/>
            <person name="Metcalf W.W."/>
            <person name="Birren B."/>
        </authorList>
    </citation>
    <scope>NUCLEOTIDE SEQUENCE [LARGE SCALE GENOMIC DNA]</scope>
    <source>
        <strain>ATCC 35395 / DSM 2834 / JCM 12185 / C2A</strain>
    </source>
</reference>
<proteinExistence type="inferred from homology"/>
<protein>
    <recommendedName>
        <fullName evidence="1">Protein-glutamate methylesterase/protein-glutamine glutaminase 1</fullName>
        <ecNumber evidence="1">3.1.1.61</ecNumber>
        <ecNumber evidence="1">3.5.1.44</ecNumber>
    </recommendedName>
</protein>
<accession>Q8TLG9</accession>
<gene>
    <name evidence="1" type="primary">cheB1</name>
    <name type="ordered locus">MA_3067</name>
</gene>